<reference key="1">
    <citation type="journal article" date="2009" name="BMC Genomics">
        <title>Genome evolution driven by host adaptations results in a more virulent and antimicrobial-resistant Streptococcus pneumoniae serotype 14.</title>
        <authorList>
            <person name="Ding F."/>
            <person name="Tang P."/>
            <person name="Hsu M.-H."/>
            <person name="Cui P."/>
            <person name="Hu S."/>
            <person name="Yu J."/>
            <person name="Chiu C.-H."/>
        </authorList>
    </citation>
    <scope>NUCLEOTIDE SEQUENCE [LARGE SCALE GENOMIC DNA]</scope>
    <source>
        <strain>CGSP14</strain>
    </source>
</reference>
<feature type="chain" id="PRO_1000141623" description="Large ribosomal subunit protein uL2">
    <location>
        <begin position="1"/>
        <end position="277"/>
    </location>
</feature>
<feature type="region of interest" description="Disordered" evidence="2">
    <location>
        <begin position="219"/>
        <end position="277"/>
    </location>
</feature>
<feature type="compositionally biased region" description="Basic and acidic residues" evidence="2">
    <location>
        <begin position="264"/>
        <end position="277"/>
    </location>
</feature>
<evidence type="ECO:0000255" key="1">
    <source>
        <dbReference type="HAMAP-Rule" id="MF_01320"/>
    </source>
</evidence>
<evidence type="ECO:0000256" key="2">
    <source>
        <dbReference type="SAM" id="MobiDB-lite"/>
    </source>
</evidence>
<evidence type="ECO:0000305" key="3"/>
<protein>
    <recommendedName>
        <fullName evidence="1">Large ribosomal subunit protein uL2</fullName>
    </recommendedName>
    <alternativeName>
        <fullName evidence="3">50S ribosomal protein L2</fullName>
    </alternativeName>
</protein>
<comment type="function">
    <text evidence="1">One of the primary rRNA binding proteins. Required for association of the 30S and 50S subunits to form the 70S ribosome, for tRNA binding and peptide bond formation. It has been suggested to have peptidyltransferase activity; this is somewhat controversial. Makes several contacts with the 16S rRNA in the 70S ribosome.</text>
</comment>
<comment type="subunit">
    <text evidence="1">Part of the 50S ribosomal subunit. Forms a bridge to the 30S subunit in the 70S ribosome.</text>
</comment>
<comment type="similarity">
    <text evidence="1">Belongs to the universal ribosomal protein uL2 family.</text>
</comment>
<dbReference type="EMBL" id="CP001033">
    <property type="protein sequence ID" value="ACB89473.1"/>
    <property type="molecule type" value="Genomic_DNA"/>
</dbReference>
<dbReference type="RefSeq" id="WP_000512911.1">
    <property type="nucleotide sequence ID" value="NC_010582.1"/>
</dbReference>
<dbReference type="SMR" id="B2IS43"/>
<dbReference type="GeneID" id="93738960"/>
<dbReference type="KEGG" id="spw:SPCG_0221"/>
<dbReference type="HOGENOM" id="CLU_036235_2_1_9"/>
<dbReference type="GO" id="GO:0015934">
    <property type="term" value="C:large ribosomal subunit"/>
    <property type="evidence" value="ECO:0007669"/>
    <property type="project" value="InterPro"/>
</dbReference>
<dbReference type="GO" id="GO:0019843">
    <property type="term" value="F:rRNA binding"/>
    <property type="evidence" value="ECO:0007669"/>
    <property type="project" value="UniProtKB-UniRule"/>
</dbReference>
<dbReference type="GO" id="GO:0003735">
    <property type="term" value="F:structural constituent of ribosome"/>
    <property type="evidence" value="ECO:0007669"/>
    <property type="project" value="InterPro"/>
</dbReference>
<dbReference type="GO" id="GO:0016740">
    <property type="term" value="F:transferase activity"/>
    <property type="evidence" value="ECO:0007669"/>
    <property type="project" value="InterPro"/>
</dbReference>
<dbReference type="GO" id="GO:0002181">
    <property type="term" value="P:cytoplasmic translation"/>
    <property type="evidence" value="ECO:0007669"/>
    <property type="project" value="TreeGrafter"/>
</dbReference>
<dbReference type="FunFam" id="2.30.30.30:FF:000001">
    <property type="entry name" value="50S ribosomal protein L2"/>
    <property type="match status" value="1"/>
</dbReference>
<dbReference type="FunFam" id="2.40.50.140:FF:000003">
    <property type="entry name" value="50S ribosomal protein L2"/>
    <property type="match status" value="1"/>
</dbReference>
<dbReference type="FunFam" id="4.10.950.10:FF:000001">
    <property type="entry name" value="50S ribosomal protein L2"/>
    <property type="match status" value="1"/>
</dbReference>
<dbReference type="Gene3D" id="2.30.30.30">
    <property type="match status" value="1"/>
</dbReference>
<dbReference type="Gene3D" id="2.40.50.140">
    <property type="entry name" value="Nucleic acid-binding proteins"/>
    <property type="match status" value="1"/>
</dbReference>
<dbReference type="Gene3D" id="4.10.950.10">
    <property type="entry name" value="Ribosomal protein L2, domain 3"/>
    <property type="match status" value="1"/>
</dbReference>
<dbReference type="HAMAP" id="MF_01320_B">
    <property type="entry name" value="Ribosomal_uL2_B"/>
    <property type="match status" value="1"/>
</dbReference>
<dbReference type="InterPro" id="IPR012340">
    <property type="entry name" value="NA-bd_OB-fold"/>
</dbReference>
<dbReference type="InterPro" id="IPR014722">
    <property type="entry name" value="Rib_uL2_dom2"/>
</dbReference>
<dbReference type="InterPro" id="IPR002171">
    <property type="entry name" value="Ribosomal_uL2"/>
</dbReference>
<dbReference type="InterPro" id="IPR005880">
    <property type="entry name" value="Ribosomal_uL2_bac/org-type"/>
</dbReference>
<dbReference type="InterPro" id="IPR022669">
    <property type="entry name" value="Ribosomal_uL2_C"/>
</dbReference>
<dbReference type="InterPro" id="IPR022671">
    <property type="entry name" value="Ribosomal_uL2_CS"/>
</dbReference>
<dbReference type="InterPro" id="IPR014726">
    <property type="entry name" value="Ribosomal_uL2_dom3"/>
</dbReference>
<dbReference type="InterPro" id="IPR022666">
    <property type="entry name" value="Ribosomal_uL2_RNA-bd_dom"/>
</dbReference>
<dbReference type="InterPro" id="IPR008991">
    <property type="entry name" value="Translation_prot_SH3-like_sf"/>
</dbReference>
<dbReference type="NCBIfam" id="TIGR01171">
    <property type="entry name" value="rplB_bact"/>
    <property type="match status" value="1"/>
</dbReference>
<dbReference type="PANTHER" id="PTHR13691:SF5">
    <property type="entry name" value="LARGE RIBOSOMAL SUBUNIT PROTEIN UL2M"/>
    <property type="match status" value="1"/>
</dbReference>
<dbReference type="PANTHER" id="PTHR13691">
    <property type="entry name" value="RIBOSOMAL PROTEIN L2"/>
    <property type="match status" value="1"/>
</dbReference>
<dbReference type="Pfam" id="PF00181">
    <property type="entry name" value="Ribosomal_L2"/>
    <property type="match status" value="1"/>
</dbReference>
<dbReference type="Pfam" id="PF03947">
    <property type="entry name" value="Ribosomal_L2_C"/>
    <property type="match status" value="1"/>
</dbReference>
<dbReference type="PIRSF" id="PIRSF002158">
    <property type="entry name" value="Ribosomal_L2"/>
    <property type="match status" value="1"/>
</dbReference>
<dbReference type="SMART" id="SM01383">
    <property type="entry name" value="Ribosomal_L2"/>
    <property type="match status" value="1"/>
</dbReference>
<dbReference type="SMART" id="SM01382">
    <property type="entry name" value="Ribosomal_L2_C"/>
    <property type="match status" value="1"/>
</dbReference>
<dbReference type="SUPFAM" id="SSF50249">
    <property type="entry name" value="Nucleic acid-binding proteins"/>
    <property type="match status" value="1"/>
</dbReference>
<dbReference type="SUPFAM" id="SSF50104">
    <property type="entry name" value="Translation proteins SH3-like domain"/>
    <property type="match status" value="1"/>
</dbReference>
<dbReference type="PROSITE" id="PS00467">
    <property type="entry name" value="RIBOSOMAL_L2"/>
    <property type="match status" value="1"/>
</dbReference>
<gene>
    <name evidence="1" type="primary">rplB</name>
    <name type="ordered locus">SPCG_0221</name>
</gene>
<accession>B2IS43</accession>
<keyword id="KW-0687">Ribonucleoprotein</keyword>
<keyword id="KW-0689">Ribosomal protein</keyword>
<keyword id="KW-0694">RNA-binding</keyword>
<keyword id="KW-0699">rRNA-binding</keyword>
<proteinExistence type="inferred from homology"/>
<sequence>MGIRVYKPTTNGRRNMTSLDFAEITTSTPEKSLLVALKSKAGRNNNGRITVRHQGGGHKRFYRLVDFKRNKDNVEAVVKTIEYDPNRSANIALVHYTDGVKAYIIAPKGLEVGQRIVSGPEADIKVGNALPLANIPVGTLIHNIELKPGRGGELVRAAGASAQVLGSEGKYVLVRLQSGEVRMILGTCRATVGVVGNEQHGLVNLGKAGRSRWKGIRPTVRGSVMNPNDHPHGGGEGKAPVGRKAPSTPWGKPALGLKTRNKKAKSDKLIVRRRNEK</sequence>
<organism>
    <name type="scientific">Streptococcus pneumoniae (strain CGSP14)</name>
    <dbReference type="NCBI Taxonomy" id="516950"/>
    <lineage>
        <taxon>Bacteria</taxon>
        <taxon>Bacillati</taxon>
        <taxon>Bacillota</taxon>
        <taxon>Bacilli</taxon>
        <taxon>Lactobacillales</taxon>
        <taxon>Streptococcaceae</taxon>
        <taxon>Streptococcus</taxon>
    </lineage>
</organism>
<name>RL2_STRPS</name>